<sequence length="150" mass="15806">MAKLILTHEVTGLGAAGDVVEVKDGYARNFLLPRGFALTWSKGGEKQVESIKAARVAREHASLEDAQKQAAALSAKPVKLVVKAGETGRLFGTVKQGDVADAVEAAGLGRIDKRKVELPAHIKSVGSYQANVRLHDDVAAVIELDVVAGK</sequence>
<comment type="function">
    <text evidence="1">Binds to the 23S rRNA.</text>
</comment>
<comment type="similarity">
    <text evidence="1">Belongs to the bacterial ribosomal protein bL9 family.</text>
</comment>
<keyword id="KW-1185">Reference proteome</keyword>
<keyword id="KW-0687">Ribonucleoprotein</keyword>
<keyword id="KW-0689">Ribosomal protein</keyword>
<keyword id="KW-0694">RNA-binding</keyword>
<keyword id="KW-0699">rRNA-binding</keyword>
<organism>
    <name type="scientific">Arthrobacter sp. (strain FB24)</name>
    <dbReference type="NCBI Taxonomy" id="290399"/>
    <lineage>
        <taxon>Bacteria</taxon>
        <taxon>Bacillati</taxon>
        <taxon>Actinomycetota</taxon>
        <taxon>Actinomycetes</taxon>
        <taxon>Micrococcales</taxon>
        <taxon>Micrococcaceae</taxon>
        <taxon>Arthrobacter</taxon>
    </lineage>
</organism>
<proteinExistence type="inferred from homology"/>
<dbReference type="EMBL" id="CP000454">
    <property type="protein sequence ID" value="ABK05492.1"/>
    <property type="molecule type" value="Genomic_DNA"/>
</dbReference>
<dbReference type="RefSeq" id="WP_011693939.1">
    <property type="nucleotide sequence ID" value="NC_008541.1"/>
</dbReference>
<dbReference type="SMR" id="A0K2H2"/>
<dbReference type="STRING" id="290399.Arth_4117"/>
<dbReference type="KEGG" id="art:Arth_4117"/>
<dbReference type="eggNOG" id="COG0359">
    <property type="taxonomic scope" value="Bacteria"/>
</dbReference>
<dbReference type="HOGENOM" id="CLU_078938_5_1_11"/>
<dbReference type="OrthoDB" id="9788336at2"/>
<dbReference type="Proteomes" id="UP000000754">
    <property type="component" value="Chromosome"/>
</dbReference>
<dbReference type="GO" id="GO:1990904">
    <property type="term" value="C:ribonucleoprotein complex"/>
    <property type="evidence" value="ECO:0007669"/>
    <property type="project" value="UniProtKB-KW"/>
</dbReference>
<dbReference type="GO" id="GO:0005840">
    <property type="term" value="C:ribosome"/>
    <property type="evidence" value="ECO:0007669"/>
    <property type="project" value="UniProtKB-KW"/>
</dbReference>
<dbReference type="GO" id="GO:0019843">
    <property type="term" value="F:rRNA binding"/>
    <property type="evidence" value="ECO:0007669"/>
    <property type="project" value="UniProtKB-UniRule"/>
</dbReference>
<dbReference type="GO" id="GO:0003735">
    <property type="term" value="F:structural constituent of ribosome"/>
    <property type="evidence" value="ECO:0007669"/>
    <property type="project" value="InterPro"/>
</dbReference>
<dbReference type="GO" id="GO:0006412">
    <property type="term" value="P:translation"/>
    <property type="evidence" value="ECO:0007669"/>
    <property type="project" value="UniProtKB-UniRule"/>
</dbReference>
<dbReference type="FunFam" id="3.40.5.10:FF:000003">
    <property type="entry name" value="50S ribosomal protein L9"/>
    <property type="match status" value="1"/>
</dbReference>
<dbReference type="Gene3D" id="3.10.430.100">
    <property type="entry name" value="Ribosomal protein L9, C-terminal domain"/>
    <property type="match status" value="1"/>
</dbReference>
<dbReference type="Gene3D" id="3.40.5.10">
    <property type="entry name" value="Ribosomal protein L9, N-terminal domain"/>
    <property type="match status" value="1"/>
</dbReference>
<dbReference type="HAMAP" id="MF_00503">
    <property type="entry name" value="Ribosomal_bL9"/>
    <property type="match status" value="1"/>
</dbReference>
<dbReference type="InterPro" id="IPR000244">
    <property type="entry name" value="Ribosomal_bL9"/>
</dbReference>
<dbReference type="InterPro" id="IPR009027">
    <property type="entry name" value="Ribosomal_bL9/RNase_H1_N"/>
</dbReference>
<dbReference type="InterPro" id="IPR020594">
    <property type="entry name" value="Ribosomal_bL9_bac/chp"/>
</dbReference>
<dbReference type="InterPro" id="IPR020069">
    <property type="entry name" value="Ribosomal_bL9_C"/>
</dbReference>
<dbReference type="InterPro" id="IPR036791">
    <property type="entry name" value="Ribosomal_bL9_C_sf"/>
</dbReference>
<dbReference type="InterPro" id="IPR020070">
    <property type="entry name" value="Ribosomal_bL9_N"/>
</dbReference>
<dbReference type="InterPro" id="IPR036935">
    <property type="entry name" value="Ribosomal_bL9_N_sf"/>
</dbReference>
<dbReference type="NCBIfam" id="TIGR00158">
    <property type="entry name" value="L9"/>
    <property type="match status" value="1"/>
</dbReference>
<dbReference type="PANTHER" id="PTHR21368">
    <property type="entry name" value="50S RIBOSOMAL PROTEIN L9"/>
    <property type="match status" value="1"/>
</dbReference>
<dbReference type="Pfam" id="PF03948">
    <property type="entry name" value="Ribosomal_L9_C"/>
    <property type="match status" value="1"/>
</dbReference>
<dbReference type="Pfam" id="PF01281">
    <property type="entry name" value="Ribosomal_L9_N"/>
    <property type="match status" value="1"/>
</dbReference>
<dbReference type="SUPFAM" id="SSF55658">
    <property type="entry name" value="L9 N-domain-like"/>
    <property type="match status" value="1"/>
</dbReference>
<dbReference type="SUPFAM" id="SSF55653">
    <property type="entry name" value="Ribosomal protein L9 C-domain"/>
    <property type="match status" value="1"/>
</dbReference>
<dbReference type="PROSITE" id="PS00651">
    <property type="entry name" value="RIBOSOMAL_L9"/>
    <property type="match status" value="1"/>
</dbReference>
<name>RL9_ARTS2</name>
<gene>
    <name evidence="1" type="primary">rplI</name>
    <name type="ordered locus">Arth_4117</name>
</gene>
<evidence type="ECO:0000255" key="1">
    <source>
        <dbReference type="HAMAP-Rule" id="MF_00503"/>
    </source>
</evidence>
<evidence type="ECO:0000305" key="2"/>
<accession>A0K2H2</accession>
<protein>
    <recommendedName>
        <fullName evidence="1">Large ribosomal subunit protein bL9</fullName>
    </recommendedName>
    <alternativeName>
        <fullName evidence="2">50S ribosomal protein L9</fullName>
    </alternativeName>
</protein>
<reference key="1">
    <citation type="journal article" date="2013" name="Stand. Genomic Sci.">
        <title>Complete genome sequence of Arthrobacter sp. strain FB24.</title>
        <authorList>
            <person name="Nakatsu C.H."/>
            <person name="Barabote R."/>
            <person name="Thompson S."/>
            <person name="Bruce D."/>
            <person name="Detter C."/>
            <person name="Brettin T."/>
            <person name="Han C."/>
            <person name="Beasley F."/>
            <person name="Chen W."/>
            <person name="Konopka A."/>
            <person name="Xie G."/>
        </authorList>
    </citation>
    <scope>NUCLEOTIDE SEQUENCE [LARGE SCALE GENOMIC DNA]</scope>
    <source>
        <strain>FB24</strain>
    </source>
</reference>
<feature type="chain" id="PRO_1000014737" description="Large ribosomal subunit protein bL9">
    <location>
        <begin position="1"/>
        <end position="150"/>
    </location>
</feature>